<organism>
    <name type="scientific">Pseudomonas fluorescens (strain Pf0-1)</name>
    <dbReference type="NCBI Taxonomy" id="205922"/>
    <lineage>
        <taxon>Bacteria</taxon>
        <taxon>Pseudomonadati</taxon>
        <taxon>Pseudomonadota</taxon>
        <taxon>Gammaproteobacteria</taxon>
        <taxon>Pseudomonadales</taxon>
        <taxon>Pseudomonadaceae</taxon>
        <taxon>Pseudomonas</taxon>
    </lineage>
</organism>
<feature type="chain" id="PRO_0000230882" description="Transcriptional repressor NrdR">
    <location>
        <begin position="1"/>
        <end position="154"/>
    </location>
</feature>
<feature type="domain" description="ATP-cone" evidence="1">
    <location>
        <begin position="49"/>
        <end position="139"/>
    </location>
</feature>
<feature type="zinc finger region" evidence="1">
    <location>
        <begin position="3"/>
        <end position="34"/>
    </location>
</feature>
<dbReference type="EMBL" id="CP000094">
    <property type="protein sequence ID" value="ABA76757.1"/>
    <property type="molecule type" value="Genomic_DNA"/>
</dbReference>
<dbReference type="RefSeq" id="WP_003228656.1">
    <property type="nucleotide sequence ID" value="NC_007492.2"/>
</dbReference>
<dbReference type="SMR" id="Q3K647"/>
<dbReference type="GeneID" id="93491355"/>
<dbReference type="KEGG" id="pfo:Pfl01_5020"/>
<dbReference type="eggNOG" id="COG1327">
    <property type="taxonomic scope" value="Bacteria"/>
</dbReference>
<dbReference type="HOGENOM" id="CLU_108412_0_0_6"/>
<dbReference type="Proteomes" id="UP000002704">
    <property type="component" value="Chromosome"/>
</dbReference>
<dbReference type="GO" id="GO:0005524">
    <property type="term" value="F:ATP binding"/>
    <property type="evidence" value="ECO:0007669"/>
    <property type="project" value="UniProtKB-KW"/>
</dbReference>
<dbReference type="GO" id="GO:0003677">
    <property type="term" value="F:DNA binding"/>
    <property type="evidence" value="ECO:0007669"/>
    <property type="project" value="UniProtKB-KW"/>
</dbReference>
<dbReference type="GO" id="GO:0008270">
    <property type="term" value="F:zinc ion binding"/>
    <property type="evidence" value="ECO:0007669"/>
    <property type="project" value="UniProtKB-UniRule"/>
</dbReference>
<dbReference type="GO" id="GO:0045892">
    <property type="term" value="P:negative regulation of DNA-templated transcription"/>
    <property type="evidence" value="ECO:0007669"/>
    <property type="project" value="UniProtKB-UniRule"/>
</dbReference>
<dbReference type="HAMAP" id="MF_00440">
    <property type="entry name" value="NrdR"/>
    <property type="match status" value="1"/>
</dbReference>
<dbReference type="InterPro" id="IPR005144">
    <property type="entry name" value="ATP-cone_dom"/>
</dbReference>
<dbReference type="InterPro" id="IPR055173">
    <property type="entry name" value="NrdR-like_N"/>
</dbReference>
<dbReference type="InterPro" id="IPR003796">
    <property type="entry name" value="RNR_NrdR-like"/>
</dbReference>
<dbReference type="NCBIfam" id="TIGR00244">
    <property type="entry name" value="transcriptional regulator NrdR"/>
    <property type="match status" value="1"/>
</dbReference>
<dbReference type="PANTHER" id="PTHR30455">
    <property type="entry name" value="TRANSCRIPTIONAL REPRESSOR NRDR"/>
    <property type="match status" value="1"/>
</dbReference>
<dbReference type="PANTHER" id="PTHR30455:SF2">
    <property type="entry name" value="TRANSCRIPTIONAL REPRESSOR NRDR"/>
    <property type="match status" value="1"/>
</dbReference>
<dbReference type="Pfam" id="PF03477">
    <property type="entry name" value="ATP-cone"/>
    <property type="match status" value="1"/>
</dbReference>
<dbReference type="Pfam" id="PF22811">
    <property type="entry name" value="Zn_ribbon_NrdR"/>
    <property type="match status" value="1"/>
</dbReference>
<dbReference type="PROSITE" id="PS51161">
    <property type="entry name" value="ATP_CONE"/>
    <property type="match status" value="1"/>
</dbReference>
<sequence>MHCPFCGANDTKVIDSRLVAEGEQVRRRRECLACGERFTTFETAELVLPRLIKTDGSRQPFDEEKLRAGMQRALEKRPVSVERLESSLVHIKHKLRATGEREVKSLVVGELVMAELQKLDEVAYIRFASVYRRFQDLNEFREEIDRLAREPVKE</sequence>
<proteinExistence type="inferred from homology"/>
<evidence type="ECO:0000255" key="1">
    <source>
        <dbReference type="HAMAP-Rule" id="MF_00440"/>
    </source>
</evidence>
<comment type="function">
    <text evidence="1">Negatively regulates transcription of bacterial ribonucleotide reductase nrd genes and operons by binding to NrdR-boxes.</text>
</comment>
<comment type="cofactor">
    <cofactor evidence="1">
        <name>Zn(2+)</name>
        <dbReference type="ChEBI" id="CHEBI:29105"/>
    </cofactor>
    <text evidence="1">Binds 1 zinc ion.</text>
</comment>
<comment type="similarity">
    <text evidence="1">Belongs to the NrdR family.</text>
</comment>
<keyword id="KW-0067">ATP-binding</keyword>
<keyword id="KW-0238">DNA-binding</keyword>
<keyword id="KW-0479">Metal-binding</keyword>
<keyword id="KW-0547">Nucleotide-binding</keyword>
<keyword id="KW-0678">Repressor</keyword>
<keyword id="KW-0804">Transcription</keyword>
<keyword id="KW-0805">Transcription regulation</keyword>
<keyword id="KW-0862">Zinc</keyword>
<keyword id="KW-0863">Zinc-finger</keyword>
<name>NRDR_PSEPF</name>
<reference key="1">
    <citation type="journal article" date="2009" name="Genome Biol.">
        <title>Genomic and genetic analyses of diversity and plant interactions of Pseudomonas fluorescens.</title>
        <authorList>
            <person name="Silby M.W."/>
            <person name="Cerdeno-Tarraga A.M."/>
            <person name="Vernikos G.S."/>
            <person name="Giddens S.R."/>
            <person name="Jackson R.W."/>
            <person name="Preston G.M."/>
            <person name="Zhang X.-X."/>
            <person name="Moon C.D."/>
            <person name="Gehrig S.M."/>
            <person name="Godfrey S.A.C."/>
            <person name="Knight C.G."/>
            <person name="Malone J.G."/>
            <person name="Robinson Z."/>
            <person name="Spiers A.J."/>
            <person name="Harris S."/>
            <person name="Challis G.L."/>
            <person name="Yaxley A.M."/>
            <person name="Harris D."/>
            <person name="Seeger K."/>
            <person name="Murphy L."/>
            <person name="Rutter S."/>
            <person name="Squares R."/>
            <person name="Quail M.A."/>
            <person name="Saunders E."/>
            <person name="Mavromatis K."/>
            <person name="Brettin T.S."/>
            <person name="Bentley S.D."/>
            <person name="Hothersall J."/>
            <person name="Stephens E."/>
            <person name="Thomas C.M."/>
            <person name="Parkhill J."/>
            <person name="Levy S.B."/>
            <person name="Rainey P.B."/>
            <person name="Thomson N.R."/>
        </authorList>
    </citation>
    <scope>NUCLEOTIDE SEQUENCE [LARGE SCALE GENOMIC DNA]</scope>
    <source>
        <strain>Pf0-1</strain>
    </source>
</reference>
<protein>
    <recommendedName>
        <fullName evidence="1">Transcriptional repressor NrdR</fullName>
    </recommendedName>
</protein>
<accession>Q3K647</accession>
<gene>
    <name evidence="1" type="primary">nrdR</name>
    <name type="ordered locus">Pfl01_5020</name>
</gene>